<feature type="chain" id="PRO_1000003516" description="Small ribosomal subunit protein bS18">
    <location>
        <begin position="1"/>
        <end position="78"/>
    </location>
</feature>
<keyword id="KW-1185">Reference proteome</keyword>
<keyword id="KW-0687">Ribonucleoprotein</keyword>
<keyword id="KW-0689">Ribosomal protein</keyword>
<keyword id="KW-0694">RNA-binding</keyword>
<keyword id="KW-0699">rRNA-binding</keyword>
<comment type="function">
    <text evidence="1">Binds as a heterodimer with protein bS6 to the central domain of the 16S rRNA, where it helps stabilize the platform of the 30S subunit.</text>
</comment>
<comment type="subunit">
    <text evidence="1">Part of the 30S ribosomal subunit. Forms a tight heterodimer with protein bS6.</text>
</comment>
<comment type="similarity">
    <text evidence="1">Belongs to the bacterial ribosomal protein bS18 family.</text>
</comment>
<dbReference type="EMBL" id="CR954253">
    <property type="protein sequence ID" value="CAI96855.1"/>
    <property type="molecule type" value="Genomic_DNA"/>
</dbReference>
<dbReference type="RefSeq" id="WP_011543465.1">
    <property type="nucleotide sequence ID" value="NC_008054.1"/>
</dbReference>
<dbReference type="SMR" id="Q1GC35"/>
<dbReference type="STRING" id="390333.Ldb0009"/>
<dbReference type="KEGG" id="ldb:Ldb0009"/>
<dbReference type="PATRIC" id="fig|390333.13.peg.537"/>
<dbReference type="eggNOG" id="COG0238">
    <property type="taxonomic scope" value="Bacteria"/>
</dbReference>
<dbReference type="HOGENOM" id="CLU_148710_2_2_9"/>
<dbReference type="BioCyc" id="LDEL390333:LDB_RS00045-MONOMER"/>
<dbReference type="Proteomes" id="UP000001259">
    <property type="component" value="Chromosome"/>
</dbReference>
<dbReference type="GO" id="GO:0022627">
    <property type="term" value="C:cytosolic small ribosomal subunit"/>
    <property type="evidence" value="ECO:0007669"/>
    <property type="project" value="TreeGrafter"/>
</dbReference>
<dbReference type="GO" id="GO:0070181">
    <property type="term" value="F:small ribosomal subunit rRNA binding"/>
    <property type="evidence" value="ECO:0007669"/>
    <property type="project" value="TreeGrafter"/>
</dbReference>
<dbReference type="GO" id="GO:0003735">
    <property type="term" value="F:structural constituent of ribosome"/>
    <property type="evidence" value="ECO:0007669"/>
    <property type="project" value="InterPro"/>
</dbReference>
<dbReference type="GO" id="GO:0006412">
    <property type="term" value="P:translation"/>
    <property type="evidence" value="ECO:0007669"/>
    <property type="project" value="UniProtKB-UniRule"/>
</dbReference>
<dbReference type="FunFam" id="4.10.640.10:FF:000003">
    <property type="entry name" value="30S ribosomal protein S18"/>
    <property type="match status" value="1"/>
</dbReference>
<dbReference type="Gene3D" id="4.10.640.10">
    <property type="entry name" value="Ribosomal protein S18"/>
    <property type="match status" value="1"/>
</dbReference>
<dbReference type="HAMAP" id="MF_00270">
    <property type="entry name" value="Ribosomal_bS18"/>
    <property type="match status" value="1"/>
</dbReference>
<dbReference type="InterPro" id="IPR001648">
    <property type="entry name" value="Ribosomal_bS18"/>
</dbReference>
<dbReference type="InterPro" id="IPR036870">
    <property type="entry name" value="Ribosomal_bS18_sf"/>
</dbReference>
<dbReference type="NCBIfam" id="TIGR00165">
    <property type="entry name" value="S18"/>
    <property type="match status" value="1"/>
</dbReference>
<dbReference type="PANTHER" id="PTHR13479">
    <property type="entry name" value="30S RIBOSOMAL PROTEIN S18"/>
    <property type="match status" value="1"/>
</dbReference>
<dbReference type="PANTHER" id="PTHR13479:SF40">
    <property type="entry name" value="SMALL RIBOSOMAL SUBUNIT PROTEIN BS18M"/>
    <property type="match status" value="1"/>
</dbReference>
<dbReference type="Pfam" id="PF01084">
    <property type="entry name" value="Ribosomal_S18"/>
    <property type="match status" value="1"/>
</dbReference>
<dbReference type="PRINTS" id="PR00974">
    <property type="entry name" value="RIBOSOMALS18"/>
</dbReference>
<dbReference type="SUPFAM" id="SSF46911">
    <property type="entry name" value="Ribosomal protein S18"/>
    <property type="match status" value="1"/>
</dbReference>
<accession>Q1GC35</accession>
<evidence type="ECO:0000255" key="1">
    <source>
        <dbReference type="HAMAP-Rule" id="MF_00270"/>
    </source>
</evidence>
<evidence type="ECO:0000305" key="2"/>
<organism>
    <name type="scientific">Lactobacillus delbrueckii subsp. bulgaricus (strain ATCC 11842 / DSM 20081 / BCRC 10696 / JCM 1002 / NBRC 13953 / NCIMB 11778 / NCTC 12712 / WDCM 00102 / Lb 14)</name>
    <dbReference type="NCBI Taxonomy" id="390333"/>
    <lineage>
        <taxon>Bacteria</taxon>
        <taxon>Bacillati</taxon>
        <taxon>Bacillota</taxon>
        <taxon>Bacilli</taxon>
        <taxon>Lactobacillales</taxon>
        <taxon>Lactobacillaceae</taxon>
        <taxon>Lactobacillus</taxon>
    </lineage>
</organism>
<gene>
    <name evidence="1" type="primary">rpsR</name>
    <name type="ordered locus">Ldb0009</name>
</gene>
<proteinExistence type="inferred from homology"/>
<name>RS18_LACDA</name>
<reference key="1">
    <citation type="journal article" date="2006" name="Proc. Natl. Acad. Sci. U.S.A.">
        <title>The complete genome sequence of Lactobacillus bulgaricus reveals extensive and ongoing reductive evolution.</title>
        <authorList>
            <person name="van de Guchte M."/>
            <person name="Penaud S."/>
            <person name="Grimaldi C."/>
            <person name="Barbe V."/>
            <person name="Bryson K."/>
            <person name="Nicolas P."/>
            <person name="Robert C."/>
            <person name="Oztas S."/>
            <person name="Mangenot S."/>
            <person name="Couloux A."/>
            <person name="Loux V."/>
            <person name="Dervyn R."/>
            <person name="Bossy R."/>
            <person name="Bolotin A."/>
            <person name="Batto J.-M."/>
            <person name="Walunas T."/>
            <person name="Gibrat J.-F."/>
            <person name="Bessieres P."/>
            <person name="Weissenbach J."/>
            <person name="Ehrlich S.D."/>
            <person name="Maguin E."/>
        </authorList>
    </citation>
    <scope>NUCLEOTIDE SEQUENCE [LARGE SCALE GENOMIC DNA]</scope>
    <source>
        <strain>ATCC 11842 / DSM 20081 / BCRC 10696 / JCM 1002 / NBRC 13953 / NCIMB 11778 / NCTC 12712 / WDCM 00102 / Lb 14</strain>
    </source>
</reference>
<protein>
    <recommendedName>
        <fullName evidence="1">Small ribosomal subunit protein bS18</fullName>
    </recommendedName>
    <alternativeName>
        <fullName evidence="2">30S ribosomal protein S18</fullName>
    </alternativeName>
</protein>
<sequence length="78" mass="8928">MPQQRKGGRRRRKVDLIAANHIDYVDYKDVDLLKHFISERGKILPRSVTGTSAKNQRKVANAIKRARIMGLLPFVAED</sequence>